<sequence length="329" mass="35181">MFSLSFIVIAVIIVVALLILFSFVPIGLWISALAAGVHVGIGTLVGMRLRRVSPRKVIAPLIKAHKAGLALTTNQLESHYLAGGNVDRVVDANIAAQRADIDLPFERAAAIDLAGRDVLEAVQMSVNPKVIETPFIAGVAMNGIEVKAKARITVRANIARLVGGAGEETIIARVGEGIVSTIGSSKHHTEVLENPDNISKTVLSKGLDSGTAFEILSIDIADVDISKNIGADLQTEQALADKNIAQAKAEERRAMAVATEQEMKARVQEMHAKVVEAESEVPLAMAEALRSGNISVKDYYNLKNIEADTGMRNAINKRTDQSDDESPEH</sequence>
<proteinExistence type="inferred from homology"/>
<comment type="function">
    <text evidence="1">Found in functional membrane microdomains (FMM) that may be equivalent to eukaryotic membrane rafts. FMMs are highly dynamic and increase in number as cells age. Flotillins are thought to be important factors in membrane fluidity.</text>
</comment>
<comment type="subunit">
    <text evidence="1">Homooligomerizes.</text>
</comment>
<comment type="subcellular location">
    <subcellularLocation>
        <location evidence="1">Cell membrane</location>
        <topology evidence="1">Multi-pass membrane protein</topology>
    </subcellularLocation>
    <subcellularLocation>
        <location evidence="1">Membrane raft</location>
        <topology evidence="1">Multi-pass membrane protein</topology>
    </subcellularLocation>
</comment>
<comment type="similarity">
    <text evidence="1">Belongs to the flotillin-like FloA family.</text>
</comment>
<dbReference type="EMBL" id="BX571857">
    <property type="protein sequence ID" value="CAG43312.1"/>
    <property type="molecule type" value="Genomic_DNA"/>
</dbReference>
<dbReference type="RefSeq" id="WP_000492114.1">
    <property type="nucleotide sequence ID" value="NC_002953.3"/>
</dbReference>
<dbReference type="SMR" id="Q6G8Z4"/>
<dbReference type="GeneID" id="98345944"/>
<dbReference type="KEGG" id="sas:SAS1511"/>
<dbReference type="HOGENOM" id="CLU_836378_0_0_9"/>
<dbReference type="GO" id="GO:0045121">
    <property type="term" value="C:membrane raft"/>
    <property type="evidence" value="ECO:0007669"/>
    <property type="project" value="UniProtKB-SubCell"/>
</dbReference>
<dbReference type="GO" id="GO:0005886">
    <property type="term" value="C:plasma membrane"/>
    <property type="evidence" value="ECO:0007669"/>
    <property type="project" value="UniProtKB-SubCell"/>
</dbReference>
<dbReference type="HAMAP" id="MF_01562">
    <property type="entry name" value="FloA"/>
    <property type="match status" value="1"/>
</dbReference>
<dbReference type="InterPro" id="IPR022853">
    <property type="entry name" value="FloA"/>
</dbReference>
<dbReference type="NCBIfam" id="NF010186">
    <property type="entry name" value="PRK13665.1"/>
    <property type="match status" value="1"/>
</dbReference>
<dbReference type="Pfam" id="PF12127">
    <property type="entry name" value="FloA"/>
    <property type="match status" value="1"/>
</dbReference>
<protein>
    <recommendedName>
        <fullName evidence="1">Flotillin-like protein FloA</fullName>
    </recommendedName>
</protein>
<gene>
    <name evidence="1" type="primary">floA</name>
    <name type="ordered locus">SAS1511</name>
</gene>
<name>FLOA_STAAS</name>
<evidence type="ECO:0000255" key="1">
    <source>
        <dbReference type="HAMAP-Rule" id="MF_01562"/>
    </source>
</evidence>
<accession>Q6G8Z4</accession>
<reference key="1">
    <citation type="journal article" date="2004" name="Proc. Natl. Acad. Sci. U.S.A.">
        <title>Complete genomes of two clinical Staphylococcus aureus strains: evidence for the rapid evolution of virulence and drug resistance.</title>
        <authorList>
            <person name="Holden M.T.G."/>
            <person name="Feil E.J."/>
            <person name="Lindsay J.A."/>
            <person name="Peacock S.J."/>
            <person name="Day N.P.J."/>
            <person name="Enright M.C."/>
            <person name="Foster T.J."/>
            <person name="Moore C.E."/>
            <person name="Hurst L."/>
            <person name="Atkin R."/>
            <person name="Barron A."/>
            <person name="Bason N."/>
            <person name="Bentley S.D."/>
            <person name="Chillingworth C."/>
            <person name="Chillingworth T."/>
            <person name="Churcher C."/>
            <person name="Clark L."/>
            <person name="Corton C."/>
            <person name="Cronin A."/>
            <person name="Doggett J."/>
            <person name="Dowd L."/>
            <person name="Feltwell T."/>
            <person name="Hance Z."/>
            <person name="Harris B."/>
            <person name="Hauser H."/>
            <person name="Holroyd S."/>
            <person name="Jagels K."/>
            <person name="James K.D."/>
            <person name="Lennard N."/>
            <person name="Line A."/>
            <person name="Mayes R."/>
            <person name="Moule S."/>
            <person name="Mungall K."/>
            <person name="Ormond D."/>
            <person name="Quail M.A."/>
            <person name="Rabbinowitsch E."/>
            <person name="Rutherford K.M."/>
            <person name="Sanders M."/>
            <person name="Sharp S."/>
            <person name="Simmonds M."/>
            <person name="Stevens K."/>
            <person name="Whitehead S."/>
            <person name="Barrell B.G."/>
            <person name="Spratt B.G."/>
            <person name="Parkhill J."/>
        </authorList>
    </citation>
    <scope>NUCLEOTIDE SEQUENCE [LARGE SCALE GENOMIC DNA]</scope>
    <source>
        <strain>MSSA476</strain>
    </source>
</reference>
<feature type="chain" id="PRO_0000232562" description="Flotillin-like protein FloA">
    <location>
        <begin position="1"/>
        <end position="329"/>
    </location>
</feature>
<feature type="transmembrane region" description="Helical" evidence="1">
    <location>
        <begin position="6"/>
        <end position="26"/>
    </location>
</feature>
<feature type="transmembrane region" description="Helical" evidence="1">
    <location>
        <begin position="27"/>
        <end position="47"/>
    </location>
</feature>
<organism>
    <name type="scientific">Staphylococcus aureus (strain MSSA476)</name>
    <dbReference type="NCBI Taxonomy" id="282459"/>
    <lineage>
        <taxon>Bacteria</taxon>
        <taxon>Bacillati</taxon>
        <taxon>Bacillota</taxon>
        <taxon>Bacilli</taxon>
        <taxon>Bacillales</taxon>
        <taxon>Staphylococcaceae</taxon>
        <taxon>Staphylococcus</taxon>
    </lineage>
</organism>
<keyword id="KW-1003">Cell membrane</keyword>
<keyword id="KW-0472">Membrane</keyword>
<keyword id="KW-0812">Transmembrane</keyword>
<keyword id="KW-1133">Transmembrane helix</keyword>